<organism>
    <name type="scientific">Oreochromis niloticus</name>
    <name type="common">Nile tilapia</name>
    <name type="synonym">Tilapia nilotica</name>
    <dbReference type="NCBI Taxonomy" id="8128"/>
    <lineage>
        <taxon>Eukaryota</taxon>
        <taxon>Metazoa</taxon>
        <taxon>Chordata</taxon>
        <taxon>Craniata</taxon>
        <taxon>Vertebrata</taxon>
        <taxon>Euteleostomi</taxon>
        <taxon>Actinopterygii</taxon>
        <taxon>Neopterygii</taxon>
        <taxon>Teleostei</taxon>
        <taxon>Neoteleostei</taxon>
        <taxon>Acanthomorphata</taxon>
        <taxon>Ovalentaria</taxon>
        <taxon>Cichlomorphae</taxon>
        <taxon>Cichliformes</taxon>
        <taxon>Cichlidae</taxon>
        <taxon>African cichlids</taxon>
        <taxon>Pseudocrenilabrinae</taxon>
        <taxon>Oreochromini</taxon>
        <taxon>Oreochromis</taxon>
    </lineage>
</organism>
<gene>
    <name type="primary">naca</name>
</gene>
<proteinExistence type="evidence at transcript level"/>
<protein>
    <recommendedName>
        <fullName>Nascent polypeptide-associated complex subunit alpha</fullName>
        <shortName>NAC-alpha</shortName>
    </recommendedName>
    <alternativeName>
        <fullName>Alpha-NAC</fullName>
    </alternativeName>
</protein>
<keyword id="KW-0653">Protein transport</keyword>
<keyword id="KW-1185">Reference proteome</keyword>
<keyword id="KW-0813">Transport</keyword>
<accession>Q8AWF2</accession>
<dbReference type="EMBL" id="AY168640">
    <property type="protein sequence ID" value="AAN86982.1"/>
    <property type="molecule type" value="mRNA"/>
</dbReference>
<dbReference type="RefSeq" id="XP_003439022.1">
    <property type="nucleotide sequence ID" value="XM_003438974.4"/>
</dbReference>
<dbReference type="RefSeq" id="XP_005448688.1">
    <property type="nucleotide sequence ID" value="XM_005448631.1"/>
</dbReference>
<dbReference type="SMR" id="Q8AWF2"/>
<dbReference type="FunCoup" id="Q8AWF2">
    <property type="interactions" value="1669"/>
</dbReference>
<dbReference type="STRING" id="8128.ENSONIP00000039249"/>
<dbReference type="Ensembl" id="ENSONIT00000021527.2">
    <property type="protein sequence ID" value="ENSONIP00000021508.2"/>
    <property type="gene ID" value="ENSONIG00000017056.2"/>
</dbReference>
<dbReference type="GeneID" id="100534485"/>
<dbReference type="KEGG" id="onl:100534485"/>
<dbReference type="CTD" id="4666"/>
<dbReference type="eggNOG" id="KOG2239">
    <property type="taxonomic scope" value="Eukaryota"/>
</dbReference>
<dbReference type="GeneTree" id="ENSGT00940000161501"/>
<dbReference type="InParanoid" id="Q8AWF2"/>
<dbReference type="OrthoDB" id="8965041at2759"/>
<dbReference type="Proteomes" id="UP000005207">
    <property type="component" value="Linkage group LG20"/>
</dbReference>
<dbReference type="GO" id="GO:0005854">
    <property type="term" value="C:nascent polypeptide-associated complex"/>
    <property type="evidence" value="ECO:0007669"/>
    <property type="project" value="InterPro"/>
</dbReference>
<dbReference type="GO" id="GO:0015031">
    <property type="term" value="P:protein transport"/>
    <property type="evidence" value="ECO:0007669"/>
    <property type="project" value="UniProtKB-KW"/>
</dbReference>
<dbReference type="CDD" id="cd22054">
    <property type="entry name" value="NAC_NACA"/>
    <property type="match status" value="1"/>
</dbReference>
<dbReference type="CDD" id="cd14415">
    <property type="entry name" value="UBA_NACA_NACP1"/>
    <property type="match status" value="1"/>
</dbReference>
<dbReference type="FunFam" id="2.20.70.30:FF:000002">
    <property type="entry name" value="Nascent polypeptide-associated complex (NAC), alpha subunit"/>
    <property type="match status" value="1"/>
</dbReference>
<dbReference type="FunFam" id="1.10.8.10:FF:000006">
    <property type="entry name" value="Putative nascent polypeptide-associated complex subunit alpha"/>
    <property type="match status" value="1"/>
</dbReference>
<dbReference type="Gene3D" id="1.10.8.10">
    <property type="entry name" value="DNA helicase RuvA subunit, C-terminal domain"/>
    <property type="match status" value="1"/>
</dbReference>
<dbReference type="Gene3D" id="2.20.70.30">
    <property type="entry name" value="Nascent polypeptide-associated complex domain"/>
    <property type="match status" value="1"/>
</dbReference>
<dbReference type="InterPro" id="IPR016641">
    <property type="entry name" value="EGD2/NACA0like"/>
</dbReference>
<dbReference type="InterPro" id="IPR044034">
    <property type="entry name" value="NAC-like_UBA"/>
</dbReference>
<dbReference type="InterPro" id="IPR038187">
    <property type="entry name" value="NAC_A/B_dom_sf"/>
</dbReference>
<dbReference type="InterPro" id="IPR002715">
    <property type="entry name" value="Nas_poly-pep-assoc_cplx_dom"/>
</dbReference>
<dbReference type="PANTHER" id="PTHR21713">
    <property type="entry name" value="NASCENT POLYPEPTIDE ASSOCIATED COMPLEX ALPHA SUBUNIT-RELATED"/>
    <property type="match status" value="1"/>
</dbReference>
<dbReference type="Pfam" id="PF01849">
    <property type="entry name" value="NAC"/>
    <property type="match status" value="1"/>
</dbReference>
<dbReference type="Pfam" id="PF19026">
    <property type="entry name" value="UBA_HYPK"/>
    <property type="match status" value="1"/>
</dbReference>
<dbReference type="PIRSF" id="PIRSF015901">
    <property type="entry name" value="NAC_alpha"/>
    <property type="match status" value="1"/>
</dbReference>
<dbReference type="SMART" id="SM01407">
    <property type="entry name" value="NAC"/>
    <property type="match status" value="1"/>
</dbReference>
<dbReference type="PROSITE" id="PS51151">
    <property type="entry name" value="NAC_AB"/>
    <property type="match status" value="1"/>
</dbReference>
<feature type="chain" id="PRO_0000135581" description="Nascent polypeptide-associated complex subunit alpha">
    <location>
        <begin position="1"/>
        <end position="215"/>
    </location>
</feature>
<feature type="domain" description="NAC-A/B" evidence="2">
    <location>
        <begin position="70"/>
        <end position="135"/>
    </location>
</feature>
<feature type="domain" description="UBA">
    <location>
        <begin position="176"/>
        <end position="213"/>
    </location>
</feature>
<feature type="region of interest" description="Disordered" evidence="3">
    <location>
        <begin position="1"/>
        <end position="81"/>
    </location>
</feature>
<feature type="compositionally biased region" description="Polar residues" evidence="3">
    <location>
        <begin position="9"/>
        <end position="21"/>
    </location>
</feature>
<feature type="compositionally biased region" description="Acidic residues" evidence="3">
    <location>
        <begin position="29"/>
        <end position="42"/>
    </location>
</feature>
<feature type="compositionally biased region" description="Low complexity" evidence="3">
    <location>
        <begin position="43"/>
        <end position="57"/>
    </location>
</feature>
<evidence type="ECO:0000250" key="1"/>
<evidence type="ECO:0000255" key="2">
    <source>
        <dbReference type="PROSITE-ProRule" id="PRU00507"/>
    </source>
</evidence>
<evidence type="ECO:0000256" key="3">
    <source>
        <dbReference type="SAM" id="MobiDB-lite"/>
    </source>
</evidence>
<evidence type="ECO:0000305" key="4"/>
<name>NACA_ORENI</name>
<reference key="1">
    <citation type="submission" date="2002-10" db="EMBL/GenBank/DDBJ databases">
        <title>Expression of nascent polypeptide-associated complex alpha polypeptide (naca) in activated non-specific cytotoxic cells.</title>
        <authorList>
            <person name="Praveen K."/>
            <person name="Evans D.L."/>
            <person name="Jaso-Friedmann L."/>
        </authorList>
    </citation>
    <scope>NUCLEOTIDE SEQUENCE [MRNA]</scope>
</reference>
<sequence>MPGEATETVPVTEQEMQQPQVETGSGTESDSDDSVPELEEQDSAQTQTQQAQLAAAAEIDEEPVSKAKQSRSEKKARKAMSKLGLRQVTGVTRVTIRKSKNILFVITKPDVYKSPASDTYIVFGEAKIEDLSQQAQLAAAEKFKVPGETVSNVQENTQTPTVQEESEEEEVDETGVEVKDIELVMSQANVSRAKAVRALKNNNNDIVNAIMELTM</sequence>
<comment type="function">
    <text evidence="1">May promote appropriate targeting of ribosome-nascent polypeptide complexes.</text>
</comment>
<comment type="similarity">
    <text evidence="4">Belongs to the NAC-alpha family.</text>
</comment>